<gene>
    <name evidence="1" type="primary">astD</name>
    <name type="ordered locus">Sbal_0573</name>
</gene>
<evidence type="ECO:0000255" key="1">
    <source>
        <dbReference type="HAMAP-Rule" id="MF_01174"/>
    </source>
</evidence>
<comment type="function">
    <text evidence="1">Catalyzes the NAD-dependent reduction of succinylglutamate semialdehyde into succinylglutamate.</text>
</comment>
<comment type="catalytic activity">
    <reaction evidence="1">
        <text>N-succinyl-L-glutamate 5-semialdehyde + NAD(+) + H2O = N-succinyl-L-glutamate + NADH + 2 H(+)</text>
        <dbReference type="Rhea" id="RHEA:10812"/>
        <dbReference type="ChEBI" id="CHEBI:15377"/>
        <dbReference type="ChEBI" id="CHEBI:15378"/>
        <dbReference type="ChEBI" id="CHEBI:57540"/>
        <dbReference type="ChEBI" id="CHEBI:57945"/>
        <dbReference type="ChEBI" id="CHEBI:58520"/>
        <dbReference type="ChEBI" id="CHEBI:58763"/>
        <dbReference type="EC" id="1.2.1.71"/>
    </reaction>
</comment>
<comment type="pathway">
    <text evidence="1">Amino-acid degradation; L-arginine degradation via AST pathway; L-glutamate and succinate from L-arginine: step 4/5.</text>
</comment>
<comment type="similarity">
    <text evidence="1">Belongs to the aldehyde dehydrogenase family. AstD subfamily.</text>
</comment>
<protein>
    <recommendedName>
        <fullName evidence="1">N-succinylglutamate 5-semialdehyde dehydrogenase</fullName>
        <ecNumber evidence="1">1.2.1.71</ecNumber>
    </recommendedName>
    <alternativeName>
        <fullName evidence="1">Succinylglutamic semialdehyde dehydrogenase</fullName>
        <shortName evidence="1">SGSD</shortName>
    </alternativeName>
</protein>
<accession>A3D039</accession>
<reference key="1">
    <citation type="submission" date="2007-02" db="EMBL/GenBank/DDBJ databases">
        <title>Complete sequence of chromosome of Shewanella baltica OS155.</title>
        <authorList>
            <consortium name="US DOE Joint Genome Institute"/>
            <person name="Copeland A."/>
            <person name="Lucas S."/>
            <person name="Lapidus A."/>
            <person name="Barry K."/>
            <person name="Detter J.C."/>
            <person name="Glavina del Rio T."/>
            <person name="Hammon N."/>
            <person name="Israni S."/>
            <person name="Dalin E."/>
            <person name="Tice H."/>
            <person name="Pitluck S."/>
            <person name="Sims D.R."/>
            <person name="Brettin T."/>
            <person name="Bruce D."/>
            <person name="Han C."/>
            <person name="Tapia R."/>
            <person name="Brainard J."/>
            <person name="Schmutz J."/>
            <person name="Larimer F."/>
            <person name="Land M."/>
            <person name="Hauser L."/>
            <person name="Kyrpides N."/>
            <person name="Mikhailova N."/>
            <person name="Brettar I."/>
            <person name="Klappenbach J."/>
            <person name="Konstantinidis K."/>
            <person name="Rodrigues J."/>
            <person name="Tiedje J."/>
            <person name="Richardson P."/>
        </authorList>
    </citation>
    <scope>NUCLEOTIDE SEQUENCE [LARGE SCALE GENOMIC DNA]</scope>
    <source>
        <strain>OS155 / ATCC BAA-1091</strain>
    </source>
</reference>
<name>ASTD_SHEB5</name>
<feature type="chain" id="PRO_1000065764" description="N-succinylglutamate 5-semialdehyde dehydrogenase">
    <location>
        <begin position="1"/>
        <end position="486"/>
    </location>
</feature>
<feature type="active site" evidence="1">
    <location>
        <position position="243"/>
    </location>
</feature>
<feature type="active site" evidence="1">
    <location>
        <position position="277"/>
    </location>
</feature>
<feature type="binding site" evidence="1">
    <location>
        <begin position="220"/>
        <end position="225"/>
    </location>
    <ligand>
        <name>NAD(+)</name>
        <dbReference type="ChEBI" id="CHEBI:57540"/>
    </ligand>
</feature>
<organism>
    <name type="scientific">Shewanella baltica (strain OS155 / ATCC BAA-1091)</name>
    <dbReference type="NCBI Taxonomy" id="325240"/>
    <lineage>
        <taxon>Bacteria</taxon>
        <taxon>Pseudomonadati</taxon>
        <taxon>Pseudomonadota</taxon>
        <taxon>Gammaproteobacteria</taxon>
        <taxon>Alteromonadales</taxon>
        <taxon>Shewanellaceae</taxon>
        <taxon>Shewanella</taxon>
    </lineage>
</organism>
<proteinExistence type="inferred from homology"/>
<sequence>MTHYIQGQWHAGKGHDVASINPANAQTIWTGKTATAEQVNAAVDAAREAQFDWFMLGFDARLAIVEAYRSQLEANKAELAETIAQETGKPQWETATEVGAMIGKIALSAAAYNKRTGTEANDTPAGRAVIRHKPHGVVAVFGPYNFPGHLPNGHIVPALLAGNTVIFKPSELTPKVAELMVSLWDKAGLPAGVLNLVQGEVDTGKALASHPQLDGLFFTGSSRTGHFLHQQYAGHPGKILALEMGGNNPLIIKGVQDIKAAVHDILQSAYISSGQRCTCARRLYVEQGEQGDALIAMLAAAVKQIKVGPWNAQPQPFMGSMISETAAKGMVAAQTNLQNLGGVSLVELTHLEAGTGLVSPGLIDVTAIDVLPDEEYFGPLLQLVRYSDFDQAIKLANQTRYGLSAGLLADSREDYDYFLARIRAGIVNWNKQITGASGAAPFGGVGASGNHRASAFYAADYCAYPVASVEADAVSLPATLSPGLSL</sequence>
<dbReference type="EC" id="1.2.1.71" evidence="1"/>
<dbReference type="EMBL" id="CP000563">
    <property type="protein sequence ID" value="ABN60102.1"/>
    <property type="molecule type" value="Genomic_DNA"/>
</dbReference>
<dbReference type="RefSeq" id="WP_011845734.1">
    <property type="nucleotide sequence ID" value="NC_009052.1"/>
</dbReference>
<dbReference type="SMR" id="A3D039"/>
<dbReference type="STRING" id="325240.Sbal_0573"/>
<dbReference type="GeneID" id="11773889"/>
<dbReference type="KEGG" id="sbl:Sbal_0573"/>
<dbReference type="HOGENOM" id="CLU_005391_1_0_6"/>
<dbReference type="OrthoDB" id="9812625at2"/>
<dbReference type="UniPathway" id="UPA00185">
    <property type="reaction ID" value="UER00282"/>
</dbReference>
<dbReference type="Proteomes" id="UP000001557">
    <property type="component" value="Chromosome"/>
</dbReference>
<dbReference type="GO" id="GO:0043824">
    <property type="term" value="F:succinylglutamate-semialdehyde dehydrogenase activity"/>
    <property type="evidence" value="ECO:0007669"/>
    <property type="project" value="UniProtKB-EC"/>
</dbReference>
<dbReference type="GO" id="GO:0019544">
    <property type="term" value="P:arginine catabolic process to glutamate"/>
    <property type="evidence" value="ECO:0007669"/>
    <property type="project" value="UniProtKB-UniRule"/>
</dbReference>
<dbReference type="GO" id="GO:0019545">
    <property type="term" value="P:arginine catabolic process to succinate"/>
    <property type="evidence" value="ECO:0007669"/>
    <property type="project" value="UniProtKB-UniRule"/>
</dbReference>
<dbReference type="CDD" id="cd07095">
    <property type="entry name" value="ALDH_SGSD_AstD"/>
    <property type="match status" value="1"/>
</dbReference>
<dbReference type="FunFam" id="3.40.309.10:FF:000013">
    <property type="entry name" value="N-succinylglutamate 5-semialdehyde dehydrogenase"/>
    <property type="match status" value="1"/>
</dbReference>
<dbReference type="FunFam" id="3.40.605.10:FF:000010">
    <property type="entry name" value="N-succinylglutamate 5-semialdehyde dehydrogenase"/>
    <property type="match status" value="1"/>
</dbReference>
<dbReference type="Gene3D" id="3.40.605.10">
    <property type="entry name" value="Aldehyde Dehydrogenase, Chain A, domain 1"/>
    <property type="match status" value="1"/>
</dbReference>
<dbReference type="Gene3D" id="3.40.309.10">
    <property type="entry name" value="Aldehyde Dehydrogenase, Chain A, domain 2"/>
    <property type="match status" value="1"/>
</dbReference>
<dbReference type="HAMAP" id="MF_01174">
    <property type="entry name" value="Aldedh_AstD"/>
    <property type="match status" value="1"/>
</dbReference>
<dbReference type="InterPro" id="IPR016161">
    <property type="entry name" value="Ald_DH/histidinol_DH"/>
</dbReference>
<dbReference type="InterPro" id="IPR016163">
    <property type="entry name" value="Ald_DH_C"/>
</dbReference>
<dbReference type="InterPro" id="IPR016160">
    <property type="entry name" value="Ald_DH_CS_CYS"/>
</dbReference>
<dbReference type="InterPro" id="IPR029510">
    <property type="entry name" value="Ald_DH_CS_GLU"/>
</dbReference>
<dbReference type="InterPro" id="IPR016162">
    <property type="entry name" value="Ald_DH_N"/>
</dbReference>
<dbReference type="InterPro" id="IPR015590">
    <property type="entry name" value="Aldehyde_DH_dom"/>
</dbReference>
<dbReference type="InterPro" id="IPR017649">
    <property type="entry name" value="SuccinylGlu_semiald_DH_AstD"/>
</dbReference>
<dbReference type="NCBIfam" id="TIGR03240">
    <property type="entry name" value="arg_catab_astD"/>
    <property type="match status" value="1"/>
</dbReference>
<dbReference type="NCBIfam" id="NF006992">
    <property type="entry name" value="PRK09457.1"/>
    <property type="match status" value="1"/>
</dbReference>
<dbReference type="PANTHER" id="PTHR11699">
    <property type="entry name" value="ALDEHYDE DEHYDROGENASE-RELATED"/>
    <property type="match status" value="1"/>
</dbReference>
<dbReference type="Pfam" id="PF00171">
    <property type="entry name" value="Aldedh"/>
    <property type="match status" value="1"/>
</dbReference>
<dbReference type="SUPFAM" id="SSF53720">
    <property type="entry name" value="ALDH-like"/>
    <property type="match status" value="1"/>
</dbReference>
<dbReference type="PROSITE" id="PS00070">
    <property type="entry name" value="ALDEHYDE_DEHYDR_CYS"/>
    <property type="match status" value="1"/>
</dbReference>
<dbReference type="PROSITE" id="PS00687">
    <property type="entry name" value="ALDEHYDE_DEHYDR_GLU"/>
    <property type="match status" value="1"/>
</dbReference>
<keyword id="KW-0056">Arginine metabolism</keyword>
<keyword id="KW-0520">NAD</keyword>
<keyword id="KW-0560">Oxidoreductase</keyword>
<keyword id="KW-1185">Reference proteome</keyword>